<organism>
    <name type="scientific">Conus litteratus</name>
    <name type="common">Lettered cone</name>
    <dbReference type="NCBI Taxonomy" id="89445"/>
    <lineage>
        <taxon>Eukaryota</taxon>
        <taxon>Metazoa</taxon>
        <taxon>Spiralia</taxon>
        <taxon>Lophotrochozoa</taxon>
        <taxon>Mollusca</taxon>
        <taxon>Gastropoda</taxon>
        <taxon>Caenogastropoda</taxon>
        <taxon>Neogastropoda</taxon>
        <taxon>Conoidea</taxon>
        <taxon>Conidae</taxon>
        <taxon>Conus</taxon>
        <taxon>Elisaconus</taxon>
    </lineage>
</organism>
<name>O163_CONLT</name>
<accession>Q2I2R2</accession>
<protein>
    <recommendedName>
        <fullName>Conotoxin Lt6.3</fullName>
    </recommendedName>
    <alternativeName>
        <fullName>Lt6c</fullName>
    </alternativeName>
</protein>
<keyword id="KW-1015">Disulfide bond</keyword>
<keyword id="KW-0960">Knottin</keyword>
<keyword id="KW-0964">Secreted</keyword>
<keyword id="KW-0732">Signal</keyword>
<keyword id="KW-0800">Toxin</keyword>
<dbReference type="EMBL" id="DQ345370">
    <property type="protein sequence ID" value="ABC74978.1"/>
    <property type="molecule type" value="mRNA"/>
</dbReference>
<dbReference type="SMR" id="Q2I2R2"/>
<dbReference type="ConoServer" id="1156">
    <property type="toxin name" value="LtVIC precursor"/>
</dbReference>
<dbReference type="GO" id="GO:0005576">
    <property type="term" value="C:extracellular region"/>
    <property type="evidence" value="ECO:0007669"/>
    <property type="project" value="UniProtKB-SubCell"/>
</dbReference>
<dbReference type="GO" id="GO:0008200">
    <property type="term" value="F:ion channel inhibitor activity"/>
    <property type="evidence" value="ECO:0007669"/>
    <property type="project" value="InterPro"/>
</dbReference>
<dbReference type="GO" id="GO:0090729">
    <property type="term" value="F:toxin activity"/>
    <property type="evidence" value="ECO:0007669"/>
    <property type="project" value="UniProtKB-KW"/>
</dbReference>
<dbReference type="InterPro" id="IPR004214">
    <property type="entry name" value="Conotoxin"/>
</dbReference>
<dbReference type="Pfam" id="PF02950">
    <property type="entry name" value="Conotoxin"/>
    <property type="match status" value="1"/>
</dbReference>
<proteinExistence type="evidence at transcript level"/>
<feature type="signal peptide" evidence="2">
    <location>
        <begin position="1"/>
        <end position="22"/>
    </location>
</feature>
<feature type="propeptide" id="PRO_0000315496" evidence="3">
    <location>
        <begin position="23"/>
        <end position="46"/>
    </location>
</feature>
<feature type="peptide" id="PRO_0000315497" description="Conotoxin Lt6.3">
    <location>
        <begin position="47"/>
        <end position="72"/>
    </location>
</feature>
<feature type="disulfide bond" evidence="1">
    <location>
        <begin position="47"/>
        <end position="61"/>
    </location>
</feature>
<feature type="disulfide bond" evidence="1">
    <location>
        <begin position="54"/>
        <end position="64"/>
    </location>
</feature>
<feature type="disulfide bond" evidence="1">
    <location>
        <begin position="60"/>
        <end position="71"/>
    </location>
</feature>
<evidence type="ECO:0000250" key="1"/>
<evidence type="ECO:0000255" key="2"/>
<evidence type="ECO:0000305" key="3"/>
<sequence>MKLTSVVIVAVLFLAACQLTTSDGSRGTWKDRAVRSITKVSMLRWPCKVAGSPCGLVSECCGTCNVLRNRCV</sequence>
<comment type="subcellular location">
    <subcellularLocation>
        <location evidence="1">Secreted</location>
    </subcellularLocation>
</comment>
<comment type="tissue specificity">
    <text>Expressed by the venom duct.</text>
</comment>
<comment type="domain">
    <text evidence="1">The presence of a 'disulfide through disulfide knot' structurally defines this protein as a knottin.</text>
</comment>
<comment type="domain">
    <text>The cysteine framework is VI/VII (C-C-CC-C-C).</text>
</comment>
<comment type="similarity">
    <text evidence="3">Belongs to the conotoxin O1 superfamily.</text>
</comment>
<reference key="1">
    <citation type="journal article" date="2006" name="Genomics">
        <title>Diversity and evolution of conotoxins based on gene expression profiling of Conus litteratus.</title>
        <authorList>
            <person name="Pi C."/>
            <person name="Liu J."/>
            <person name="Peng C."/>
            <person name="Liu Y."/>
            <person name="Jiang X."/>
            <person name="Zhao Y."/>
            <person name="Tang S."/>
            <person name="Wang L."/>
            <person name="Dong M."/>
            <person name="Chen S."/>
            <person name="Xu A."/>
        </authorList>
    </citation>
    <scope>NUCLEOTIDE SEQUENCE [MRNA]</scope>
    <source>
        <tissue>Venom duct</tissue>
    </source>
</reference>